<evidence type="ECO:0000255" key="1">
    <source>
        <dbReference type="HAMAP-Rule" id="MF_00364"/>
    </source>
</evidence>
<evidence type="ECO:0000305" key="2"/>
<dbReference type="EC" id="3.2.1.52" evidence="1"/>
<dbReference type="EMBL" id="AE005174">
    <property type="protein sequence ID" value="AAG55853.1"/>
    <property type="molecule type" value="Genomic_DNA"/>
</dbReference>
<dbReference type="EMBL" id="BA000007">
    <property type="protein sequence ID" value="BAB34908.1"/>
    <property type="molecule type" value="Genomic_DNA"/>
</dbReference>
<dbReference type="PIR" id="A85674">
    <property type="entry name" value="A85674"/>
</dbReference>
<dbReference type="PIR" id="E90814">
    <property type="entry name" value="E90814"/>
</dbReference>
<dbReference type="RefSeq" id="NP_309512.1">
    <property type="nucleotide sequence ID" value="NC_002695.1"/>
</dbReference>
<dbReference type="RefSeq" id="WP_000529292.1">
    <property type="nucleotide sequence ID" value="NZ_VOAI01000018.1"/>
</dbReference>
<dbReference type="SMR" id="P58067"/>
<dbReference type="STRING" id="155864.Z1746"/>
<dbReference type="CAZy" id="GH3">
    <property type="family name" value="Glycoside Hydrolase Family 3"/>
</dbReference>
<dbReference type="GeneID" id="913266"/>
<dbReference type="KEGG" id="ece:Z1746"/>
<dbReference type="KEGG" id="ecs:ECs_1485"/>
<dbReference type="PATRIC" id="fig|386585.9.peg.1586"/>
<dbReference type="eggNOG" id="COG1472">
    <property type="taxonomic scope" value="Bacteria"/>
</dbReference>
<dbReference type="HOGENOM" id="CLU_008392_0_0_6"/>
<dbReference type="OMA" id="WQMAAEM"/>
<dbReference type="UniPathway" id="UPA00544"/>
<dbReference type="Proteomes" id="UP000000558">
    <property type="component" value="Chromosome"/>
</dbReference>
<dbReference type="Proteomes" id="UP000002519">
    <property type="component" value="Chromosome"/>
</dbReference>
<dbReference type="GO" id="GO:0005737">
    <property type="term" value="C:cytoplasm"/>
    <property type="evidence" value="ECO:0007669"/>
    <property type="project" value="UniProtKB-SubCell"/>
</dbReference>
<dbReference type="GO" id="GO:0004563">
    <property type="term" value="F:beta-N-acetylhexosaminidase activity"/>
    <property type="evidence" value="ECO:0007669"/>
    <property type="project" value="UniProtKB-UniRule"/>
</dbReference>
<dbReference type="GO" id="GO:0005975">
    <property type="term" value="P:carbohydrate metabolic process"/>
    <property type="evidence" value="ECO:0007669"/>
    <property type="project" value="InterPro"/>
</dbReference>
<dbReference type="GO" id="GO:0051301">
    <property type="term" value="P:cell division"/>
    <property type="evidence" value="ECO:0007669"/>
    <property type="project" value="UniProtKB-KW"/>
</dbReference>
<dbReference type="GO" id="GO:0071555">
    <property type="term" value="P:cell wall organization"/>
    <property type="evidence" value="ECO:0007669"/>
    <property type="project" value="UniProtKB-KW"/>
</dbReference>
<dbReference type="GO" id="GO:0009252">
    <property type="term" value="P:peptidoglycan biosynthetic process"/>
    <property type="evidence" value="ECO:0007669"/>
    <property type="project" value="UniProtKB-KW"/>
</dbReference>
<dbReference type="GO" id="GO:0009254">
    <property type="term" value="P:peptidoglycan turnover"/>
    <property type="evidence" value="ECO:0007669"/>
    <property type="project" value="UniProtKB-UniRule"/>
</dbReference>
<dbReference type="GO" id="GO:0008360">
    <property type="term" value="P:regulation of cell shape"/>
    <property type="evidence" value="ECO:0007669"/>
    <property type="project" value="UniProtKB-KW"/>
</dbReference>
<dbReference type="FunFam" id="3.20.20.300:FF:000001">
    <property type="entry name" value="Beta-hexosaminidase"/>
    <property type="match status" value="1"/>
</dbReference>
<dbReference type="Gene3D" id="3.20.20.300">
    <property type="entry name" value="Glycoside hydrolase, family 3, N-terminal domain"/>
    <property type="match status" value="1"/>
</dbReference>
<dbReference type="HAMAP" id="MF_00364">
    <property type="entry name" value="NagZ"/>
    <property type="match status" value="1"/>
</dbReference>
<dbReference type="InterPro" id="IPR022956">
    <property type="entry name" value="Beta_hexosaminidase_bac"/>
</dbReference>
<dbReference type="InterPro" id="IPR019800">
    <property type="entry name" value="Glyco_hydro_3_AS"/>
</dbReference>
<dbReference type="InterPro" id="IPR001764">
    <property type="entry name" value="Glyco_hydro_3_N"/>
</dbReference>
<dbReference type="InterPro" id="IPR036962">
    <property type="entry name" value="Glyco_hydro_3_N_sf"/>
</dbReference>
<dbReference type="InterPro" id="IPR017853">
    <property type="entry name" value="Glycoside_hydrolase_SF"/>
</dbReference>
<dbReference type="InterPro" id="IPR050226">
    <property type="entry name" value="NagZ_Beta-hexosaminidase"/>
</dbReference>
<dbReference type="NCBIfam" id="NF003740">
    <property type="entry name" value="PRK05337.1"/>
    <property type="match status" value="1"/>
</dbReference>
<dbReference type="PANTHER" id="PTHR30480:SF13">
    <property type="entry name" value="BETA-HEXOSAMINIDASE"/>
    <property type="match status" value="1"/>
</dbReference>
<dbReference type="PANTHER" id="PTHR30480">
    <property type="entry name" value="BETA-HEXOSAMINIDASE-RELATED"/>
    <property type="match status" value="1"/>
</dbReference>
<dbReference type="Pfam" id="PF00933">
    <property type="entry name" value="Glyco_hydro_3"/>
    <property type="match status" value="1"/>
</dbReference>
<dbReference type="SUPFAM" id="SSF51445">
    <property type="entry name" value="(Trans)glycosidases"/>
    <property type="match status" value="1"/>
</dbReference>
<dbReference type="PROSITE" id="PS00775">
    <property type="entry name" value="GLYCOSYL_HYDROL_F3"/>
    <property type="match status" value="1"/>
</dbReference>
<reference key="1">
    <citation type="journal article" date="2001" name="Nature">
        <title>Genome sequence of enterohaemorrhagic Escherichia coli O157:H7.</title>
        <authorList>
            <person name="Perna N.T."/>
            <person name="Plunkett G. III"/>
            <person name="Burland V."/>
            <person name="Mau B."/>
            <person name="Glasner J.D."/>
            <person name="Rose D.J."/>
            <person name="Mayhew G.F."/>
            <person name="Evans P.S."/>
            <person name="Gregor J."/>
            <person name="Kirkpatrick H.A."/>
            <person name="Posfai G."/>
            <person name="Hackett J."/>
            <person name="Klink S."/>
            <person name="Boutin A."/>
            <person name="Shao Y."/>
            <person name="Miller L."/>
            <person name="Grotbeck E.J."/>
            <person name="Davis N.W."/>
            <person name="Lim A."/>
            <person name="Dimalanta E.T."/>
            <person name="Potamousis K."/>
            <person name="Apodaca J."/>
            <person name="Anantharaman T.S."/>
            <person name="Lin J."/>
            <person name="Yen G."/>
            <person name="Schwartz D.C."/>
            <person name="Welch R.A."/>
            <person name="Blattner F.R."/>
        </authorList>
    </citation>
    <scope>NUCLEOTIDE SEQUENCE [LARGE SCALE GENOMIC DNA]</scope>
    <source>
        <strain>O157:H7 / EDL933 / ATCC 700927 / EHEC</strain>
    </source>
</reference>
<reference key="2">
    <citation type="journal article" date="2001" name="DNA Res.">
        <title>Complete genome sequence of enterohemorrhagic Escherichia coli O157:H7 and genomic comparison with a laboratory strain K-12.</title>
        <authorList>
            <person name="Hayashi T."/>
            <person name="Makino K."/>
            <person name="Ohnishi M."/>
            <person name="Kurokawa K."/>
            <person name="Ishii K."/>
            <person name="Yokoyama K."/>
            <person name="Han C.-G."/>
            <person name="Ohtsubo E."/>
            <person name="Nakayama K."/>
            <person name="Murata T."/>
            <person name="Tanaka M."/>
            <person name="Tobe T."/>
            <person name="Iida T."/>
            <person name="Takami H."/>
            <person name="Honda T."/>
            <person name="Sasakawa C."/>
            <person name="Ogasawara N."/>
            <person name="Yasunaga T."/>
            <person name="Kuhara S."/>
            <person name="Shiba T."/>
            <person name="Hattori M."/>
            <person name="Shinagawa H."/>
        </authorList>
    </citation>
    <scope>NUCLEOTIDE SEQUENCE [LARGE SCALE GENOMIC DNA]</scope>
    <source>
        <strain>O157:H7 / Sakai / RIMD 0509952 / EHEC</strain>
    </source>
</reference>
<gene>
    <name evidence="1" type="primary">nagZ</name>
    <name type="ordered locus">Z1746</name>
    <name type="ordered locus">ECs1485</name>
</gene>
<organism>
    <name type="scientific">Escherichia coli O157:H7</name>
    <dbReference type="NCBI Taxonomy" id="83334"/>
    <lineage>
        <taxon>Bacteria</taxon>
        <taxon>Pseudomonadati</taxon>
        <taxon>Pseudomonadota</taxon>
        <taxon>Gammaproteobacteria</taxon>
        <taxon>Enterobacterales</taxon>
        <taxon>Enterobacteriaceae</taxon>
        <taxon>Escherichia</taxon>
    </lineage>
</organism>
<accession>P58067</accession>
<proteinExistence type="inferred from homology"/>
<keyword id="KW-0131">Cell cycle</keyword>
<keyword id="KW-0132">Cell division</keyword>
<keyword id="KW-0133">Cell shape</keyword>
<keyword id="KW-0961">Cell wall biogenesis/degradation</keyword>
<keyword id="KW-0963">Cytoplasm</keyword>
<keyword id="KW-0326">Glycosidase</keyword>
<keyword id="KW-0378">Hydrolase</keyword>
<keyword id="KW-0573">Peptidoglycan synthesis</keyword>
<keyword id="KW-1185">Reference proteome</keyword>
<comment type="function">
    <text evidence="1">Plays a role in peptidoglycan recycling by cleaving the terminal beta-1,4-linked N-acetylglucosamine (GlcNAc) from peptide-linked peptidoglycan fragments, giving rise to free GlcNAc, anhydro-N-acetylmuramic acid and anhydro-N-acetylmuramic acid-linked peptides.</text>
</comment>
<comment type="catalytic activity">
    <reaction evidence="1">
        <text>Hydrolysis of terminal non-reducing N-acetyl-D-hexosamine residues in N-acetyl-beta-D-hexosaminides.</text>
        <dbReference type="EC" id="3.2.1.52"/>
    </reaction>
</comment>
<comment type="pathway">
    <text evidence="1">Cell wall biogenesis; peptidoglycan recycling.</text>
</comment>
<comment type="subunit">
    <text evidence="2">Monomer.</text>
</comment>
<comment type="subcellular location">
    <subcellularLocation>
        <location evidence="1">Cytoplasm</location>
    </subcellularLocation>
</comment>
<comment type="similarity">
    <text evidence="1">Belongs to the glycosyl hydrolase 3 family. NagZ subfamily.</text>
</comment>
<protein>
    <recommendedName>
        <fullName evidence="1">Beta-hexosaminidase</fullName>
        <ecNumber evidence="1">3.2.1.52</ecNumber>
    </recommendedName>
    <alternativeName>
        <fullName evidence="1">Beta-N-acetylhexosaminidase</fullName>
    </alternativeName>
    <alternativeName>
        <fullName evidence="1">N-acetyl-beta-glucosaminidase</fullName>
    </alternativeName>
</protein>
<name>NAGZ_ECO57</name>
<feature type="chain" id="PRO_0000210787" description="Beta-hexosaminidase">
    <location>
        <begin position="1"/>
        <end position="341"/>
    </location>
</feature>
<feature type="active site" description="Proton donor/acceptor" evidence="1">
    <location>
        <position position="176"/>
    </location>
</feature>
<feature type="active site" description="Nucleophile" evidence="1">
    <location>
        <position position="248"/>
    </location>
</feature>
<feature type="binding site" evidence="1">
    <location>
        <position position="62"/>
    </location>
    <ligand>
        <name>substrate</name>
    </ligand>
</feature>
<feature type="binding site" evidence="1">
    <location>
        <position position="70"/>
    </location>
    <ligand>
        <name>substrate</name>
    </ligand>
</feature>
<feature type="binding site" evidence="1">
    <location>
        <position position="133"/>
    </location>
    <ligand>
        <name>substrate</name>
    </ligand>
</feature>
<feature type="binding site" evidence="1">
    <location>
        <begin position="163"/>
        <end position="164"/>
    </location>
    <ligand>
        <name>substrate</name>
    </ligand>
</feature>
<feature type="site" description="Important for catalytic activity" evidence="1">
    <location>
        <position position="174"/>
    </location>
</feature>
<sequence>MGPVMLDVEGYELDAEEREILAHPLVGGLILFTRNYHDPAQLRELVRQIRAASRNHLVVAVDQEGGRVQRFREGFTRLPAAQSFAALLGMEEGGKLAQEAGWLMASEMIAMDIDISFAPVLDVGHISAAIGERSYHADPEKALAIASRFIDGMHEAGMKTTGKHFPGHGAVTADSHKETPCDPRPQAEIRAKDMSVFSTLIRENKLDAIMPAHVIYSDVDPRPASGSSYWLKTVLRQELGFDGVIFSDDLSMEGAAIMGSYAERGQVSLDAGCDMILVCNNRKGAVSVLDNLSPIKAERVTRLYHKGSFSRQELMDSARWKAISARLNQLHERWQEEKAGH</sequence>